<protein>
    <recommendedName>
        <fullName evidence="1">Chitooligosaccharide deacetylase</fullName>
        <shortName evidence="1">COD</shortName>
        <ecNumber evidence="1">3.5.1.105</ecNumber>
    </recommendedName>
    <alternativeName>
        <fullName evidence="1">Chitin disaccharide deacetylase</fullName>
    </alternativeName>
    <alternativeName>
        <fullName evidence="1">Chitobiose deacetylase</fullName>
    </alternativeName>
    <alternativeName>
        <fullName evidence="1">Chitobiose-6P deacetylase</fullName>
    </alternativeName>
    <alternativeName>
        <fullName evidence="1">Chitotriose deacetylase</fullName>
    </alternativeName>
    <alternativeName>
        <fullName evidence="1">Chitotriose-6P deacetylase</fullName>
    </alternativeName>
</protein>
<gene>
    <name evidence="1" type="primary">chbG</name>
    <name type="ordered locus">CKO_01758</name>
</gene>
<organism>
    <name type="scientific">Citrobacter koseri (strain ATCC BAA-895 / CDC 4225-83 / SGSC4696)</name>
    <dbReference type="NCBI Taxonomy" id="290338"/>
    <lineage>
        <taxon>Bacteria</taxon>
        <taxon>Pseudomonadati</taxon>
        <taxon>Pseudomonadota</taxon>
        <taxon>Gammaproteobacteria</taxon>
        <taxon>Enterobacterales</taxon>
        <taxon>Enterobacteriaceae</taxon>
        <taxon>Citrobacter</taxon>
    </lineage>
</organism>
<dbReference type="EC" id="3.5.1.105" evidence="1"/>
<dbReference type="EMBL" id="CP000822">
    <property type="protein sequence ID" value="ABV12887.1"/>
    <property type="molecule type" value="Genomic_DNA"/>
</dbReference>
<dbReference type="RefSeq" id="WP_012132624.1">
    <property type="nucleotide sequence ID" value="NC_009792.1"/>
</dbReference>
<dbReference type="SMR" id="A8AHC4"/>
<dbReference type="STRING" id="290338.CKO_01758"/>
<dbReference type="GeneID" id="45135782"/>
<dbReference type="KEGG" id="cko:CKO_01758"/>
<dbReference type="HOGENOM" id="CLU_064244_4_1_6"/>
<dbReference type="OrthoDB" id="9774177at2"/>
<dbReference type="UniPathway" id="UPA00349"/>
<dbReference type="Proteomes" id="UP000008148">
    <property type="component" value="Chromosome"/>
</dbReference>
<dbReference type="GO" id="GO:0005737">
    <property type="term" value="C:cytoplasm"/>
    <property type="evidence" value="ECO:0007669"/>
    <property type="project" value="UniProtKB-SubCell"/>
</dbReference>
<dbReference type="GO" id="GO:0036311">
    <property type="term" value="F:chitin disaccharide deacetylase activity"/>
    <property type="evidence" value="ECO:0007669"/>
    <property type="project" value="UniProtKB-UniRule"/>
</dbReference>
<dbReference type="GO" id="GO:0019213">
    <property type="term" value="F:deacetylase activity"/>
    <property type="evidence" value="ECO:0007669"/>
    <property type="project" value="TreeGrafter"/>
</dbReference>
<dbReference type="GO" id="GO:0046872">
    <property type="term" value="F:metal ion binding"/>
    <property type="evidence" value="ECO:0007669"/>
    <property type="project" value="UniProtKB-KW"/>
</dbReference>
<dbReference type="GO" id="GO:0006032">
    <property type="term" value="P:chitin catabolic process"/>
    <property type="evidence" value="ECO:0007669"/>
    <property type="project" value="UniProtKB-UniPathway"/>
</dbReference>
<dbReference type="GO" id="GO:0052777">
    <property type="term" value="P:diacetylchitobiose catabolic process"/>
    <property type="evidence" value="ECO:0007669"/>
    <property type="project" value="UniProtKB-UniRule"/>
</dbReference>
<dbReference type="GO" id="GO:0000272">
    <property type="term" value="P:polysaccharide catabolic process"/>
    <property type="evidence" value="ECO:0007669"/>
    <property type="project" value="UniProtKB-UniRule"/>
</dbReference>
<dbReference type="CDD" id="cd10803">
    <property type="entry name" value="YdjC_EF3048_like"/>
    <property type="match status" value="1"/>
</dbReference>
<dbReference type="FunFam" id="3.20.20.370:FF:000001">
    <property type="entry name" value="Chitooligosaccharide deacetylase"/>
    <property type="match status" value="1"/>
</dbReference>
<dbReference type="Gene3D" id="3.20.20.370">
    <property type="entry name" value="Glycoside hydrolase/deacetylase"/>
    <property type="match status" value="1"/>
</dbReference>
<dbReference type="HAMAP" id="MF_01246">
    <property type="entry name" value="COD"/>
    <property type="match status" value="1"/>
</dbReference>
<dbReference type="InterPro" id="IPR022948">
    <property type="entry name" value="COD_ChbG_bac"/>
</dbReference>
<dbReference type="InterPro" id="IPR011330">
    <property type="entry name" value="Glyco_hydro/deAcase_b/a-brl"/>
</dbReference>
<dbReference type="InterPro" id="IPR006879">
    <property type="entry name" value="YdjC-like"/>
</dbReference>
<dbReference type="NCBIfam" id="NF002559">
    <property type="entry name" value="PRK02134.1"/>
    <property type="match status" value="1"/>
</dbReference>
<dbReference type="PANTHER" id="PTHR31609:SF1">
    <property type="entry name" value="CARBOHYDRATE DEACETYLASE"/>
    <property type="match status" value="1"/>
</dbReference>
<dbReference type="PANTHER" id="PTHR31609">
    <property type="entry name" value="YDJC DEACETYLASE FAMILY MEMBER"/>
    <property type="match status" value="1"/>
</dbReference>
<dbReference type="Pfam" id="PF04794">
    <property type="entry name" value="YdjC"/>
    <property type="match status" value="1"/>
</dbReference>
<dbReference type="SUPFAM" id="SSF88713">
    <property type="entry name" value="Glycoside hydrolase/deacetylase"/>
    <property type="match status" value="1"/>
</dbReference>
<keyword id="KW-0119">Carbohydrate metabolism</keyword>
<keyword id="KW-0146">Chitin degradation</keyword>
<keyword id="KW-0963">Cytoplasm</keyword>
<keyword id="KW-0378">Hydrolase</keyword>
<keyword id="KW-0460">Magnesium</keyword>
<keyword id="KW-0479">Metal-binding</keyword>
<keyword id="KW-0624">Polysaccharide degradation</keyword>
<keyword id="KW-1185">Reference proteome</keyword>
<evidence type="ECO:0000255" key="1">
    <source>
        <dbReference type="HAMAP-Rule" id="MF_01246"/>
    </source>
</evidence>
<accession>A8AHC4</accession>
<name>CHBG_CITK8</name>
<reference key="1">
    <citation type="submission" date="2007-08" db="EMBL/GenBank/DDBJ databases">
        <authorList>
            <consortium name="The Citrobacter koseri Genome Sequencing Project"/>
            <person name="McClelland M."/>
            <person name="Sanderson E.K."/>
            <person name="Porwollik S."/>
            <person name="Spieth J."/>
            <person name="Clifton W.S."/>
            <person name="Latreille P."/>
            <person name="Courtney L."/>
            <person name="Wang C."/>
            <person name="Pepin K."/>
            <person name="Bhonagiri V."/>
            <person name="Nash W."/>
            <person name="Johnson M."/>
            <person name="Thiruvilangam P."/>
            <person name="Wilson R."/>
        </authorList>
    </citation>
    <scope>NUCLEOTIDE SEQUENCE [LARGE SCALE GENOMIC DNA]</scope>
    <source>
        <strain>ATCC BAA-895 / CDC 4225-83 / SGSC4696</strain>
    </source>
</reference>
<feature type="chain" id="PRO_1000067077" description="Chitooligosaccharide deacetylase">
    <location>
        <begin position="1"/>
        <end position="252"/>
    </location>
</feature>
<feature type="binding site" evidence="1">
    <location>
        <position position="61"/>
    </location>
    <ligand>
        <name>Mg(2+)</name>
        <dbReference type="ChEBI" id="CHEBI:18420"/>
    </ligand>
</feature>
<feature type="binding site" evidence="1">
    <location>
        <position position="125"/>
    </location>
    <ligand>
        <name>Mg(2+)</name>
        <dbReference type="ChEBI" id="CHEBI:18420"/>
    </ligand>
</feature>
<sequence length="252" mass="28025">MERLLIVNADDFGLSKGQNYGIVEACRNGVVTSTTALVNGDAIDHAAQLCRDVPKLAVGMHFVLTLGKPLTAMPGLTREGLLGKWIWQMAEEETLPLDEISHELECQYQRFIDLFGREPTHLDSHHHVHMFPQIFPIVAMFAAERGVALRIDRQSVLNADDLPVALRSSQGFSSEFYGDAISEALFLQVLDASADRGEKSLEVMCHPAFIDNIIRQSAYCYPRLTELDVLTSASLKYAIAERGYRLGSFLDV</sequence>
<proteinExistence type="inferred from homology"/>
<comment type="function">
    <text evidence="1">Involved in the degradation of chitin. ChbG is essential for growth on the acetylated chitooligosaccharides chitobiose and chitotriose but is dispensable for growth on cellobiose and chitosan dimer, the deacetylated form of chitobiose. Deacetylation of chitobiose-6-P and chitotriose-6-P is necessary for both the activation of the chb promoter by the regulatory protein ChbR and the hydrolysis of phosphorylated beta-glucosides by the phospho-beta-glucosidase ChbF. Catalyzes the removal of only one acetyl group from chitobiose-6-P to yield monoacetylchitobiose-6-P, the inducer of ChbR and the substrate of ChbF.</text>
</comment>
<comment type="catalytic activity">
    <reaction evidence="1">
        <text>N,N'-diacetylchitobiose + H2O = N-acetyl-beta-D-glucosaminyl-(1-&gt;4)-D-glucosamine + acetate</text>
        <dbReference type="Rhea" id="RHEA:27469"/>
        <dbReference type="ChEBI" id="CHEBI:15377"/>
        <dbReference type="ChEBI" id="CHEBI:28681"/>
        <dbReference type="ChEBI" id="CHEBI:30089"/>
        <dbReference type="ChEBI" id="CHEBI:59910"/>
        <dbReference type="EC" id="3.5.1.105"/>
    </reaction>
</comment>
<comment type="catalytic activity">
    <reaction evidence="1">
        <text>diacetylchitobiose-6'-phosphate + H2O = N'-monoacetylchitobiose-6'-phosphate + acetate</text>
        <dbReference type="Rhea" id="RHEA:35083"/>
        <dbReference type="ChEBI" id="CHEBI:15377"/>
        <dbReference type="ChEBI" id="CHEBI:30089"/>
        <dbReference type="ChEBI" id="CHEBI:64883"/>
        <dbReference type="ChEBI" id="CHEBI:71315"/>
    </reaction>
</comment>
<comment type="cofactor">
    <cofactor evidence="1">
        <name>Mg(2+)</name>
        <dbReference type="ChEBI" id="CHEBI:18420"/>
    </cofactor>
</comment>
<comment type="pathway">
    <text evidence="1">Glycan degradation; chitin degradation.</text>
</comment>
<comment type="subunit">
    <text evidence="1">Homodimer.</text>
</comment>
<comment type="subcellular location">
    <subcellularLocation>
        <location evidence="1">Cytoplasm</location>
    </subcellularLocation>
</comment>
<comment type="similarity">
    <text evidence="1">Belongs to the YdjC deacetylase family. ChbG subfamily.</text>
</comment>